<comment type="function">
    <text evidence="1">DNA-dependent RNA polymerase catalyzes the transcription of DNA into RNA using the four ribonucleoside triphosphates as substrates.</text>
</comment>
<comment type="catalytic activity">
    <reaction evidence="1">
        <text>RNA(n) + a ribonucleoside 5'-triphosphate = RNA(n+1) + diphosphate</text>
        <dbReference type="Rhea" id="RHEA:21248"/>
        <dbReference type="Rhea" id="RHEA-COMP:14527"/>
        <dbReference type="Rhea" id="RHEA-COMP:17342"/>
        <dbReference type="ChEBI" id="CHEBI:33019"/>
        <dbReference type="ChEBI" id="CHEBI:61557"/>
        <dbReference type="ChEBI" id="CHEBI:140395"/>
        <dbReference type="EC" id="2.7.7.6"/>
    </reaction>
</comment>
<comment type="cofactor">
    <cofactor evidence="1">
        <name>Mg(2+)</name>
        <dbReference type="ChEBI" id="CHEBI:18420"/>
    </cofactor>
    <text evidence="1">Binds 1 Mg(2+) ion per subunit.</text>
</comment>
<comment type="cofactor">
    <cofactor evidence="1">
        <name>Zn(2+)</name>
        <dbReference type="ChEBI" id="CHEBI:29105"/>
    </cofactor>
    <text evidence="1">Binds 1 Zn(2+) ion per subunit.</text>
</comment>
<comment type="subunit">
    <text evidence="1">In plastids the minimal PEP RNA polymerase catalytic core is composed of four subunits: alpha, beta, beta', and beta''. When a (nuclear-encoded) sigma factor is associated with the core the holoenzyme is formed, which can initiate transcription.</text>
</comment>
<comment type="subcellular location">
    <subcellularLocation>
        <location evidence="1">Plastid</location>
        <location evidence="1">Chloroplast</location>
    </subcellularLocation>
</comment>
<comment type="similarity">
    <text evidence="1">Belongs to the RNA polymerase beta' chain family. RpoC1 subfamily.</text>
</comment>
<keyword id="KW-0150">Chloroplast</keyword>
<keyword id="KW-0240">DNA-directed RNA polymerase</keyword>
<keyword id="KW-0460">Magnesium</keyword>
<keyword id="KW-0479">Metal-binding</keyword>
<keyword id="KW-0548">Nucleotidyltransferase</keyword>
<keyword id="KW-0934">Plastid</keyword>
<keyword id="KW-1185">Reference proteome</keyword>
<keyword id="KW-0804">Transcription</keyword>
<keyword id="KW-0808">Transferase</keyword>
<keyword id="KW-0862">Zinc</keyword>
<evidence type="ECO:0000255" key="1">
    <source>
        <dbReference type="HAMAP-Rule" id="MF_01323"/>
    </source>
</evidence>
<name>RPOC1_BRADI</name>
<dbReference type="EC" id="2.7.7.6" evidence="1"/>
<dbReference type="EMBL" id="EU325680">
    <property type="protein sequence ID" value="ACF08632.1"/>
    <property type="molecule type" value="Genomic_DNA"/>
</dbReference>
<dbReference type="RefSeq" id="YP_002000479.1">
    <property type="nucleotide sequence ID" value="NC_011032.1"/>
</dbReference>
<dbReference type="SMR" id="B3TN43"/>
<dbReference type="FunCoup" id="B3TN43">
    <property type="interactions" value="90"/>
</dbReference>
<dbReference type="STRING" id="15368.B3TN43"/>
<dbReference type="GeneID" id="6439871"/>
<dbReference type="KEGG" id="bdi:6439871"/>
<dbReference type="eggNOG" id="ENOG502QPYA">
    <property type="taxonomic scope" value="Eukaryota"/>
</dbReference>
<dbReference type="InParanoid" id="B3TN43"/>
<dbReference type="Proteomes" id="UP000008810">
    <property type="component" value="Chloroplast"/>
</dbReference>
<dbReference type="GO" id="GO:0009507">
    <property type="term" value="C:chloroplast"/>
    <property type="evidence" value="ECO:0007669"/>
    <property type="project" value="UniProtKB-SubCell"/>
</dbReference>
<dbReference type="GO" id="GO:0000428">
    <property type="term" value="C:DNA-directed RNA polymerase complex"/>
    <property type="evidence" value="ECO:0007669"/>
    <property type="project" value="UniProtKB-KW"/>
</dbReference>
<dbReference type="GO" id="GO:0005739">
    <property type="term" value="C:mitochondrion"/>
    <property type="evidence" value="ECO:0007669"/>
    <property type="project" value="GOC"/>
</dbReference>
<dbReference type="GO" id="GO:0003677">
    <property type="term" value="F:DNA binding"/>
    <property type="evidence" value="ECO:0007669"/>
    <property type="project" value="UniProtKB-UniRule"/>
</dbReference>
<dbReference type="GO" id="GO:0003899">
    <property type="term" value="F:DNA-directed RNA polymerase activity"/>
    <property type="evidence" value="ECO:0007669"/>
    <property type="project" value="UniProtKB-UniRule"/>
</dbReference>
<dbReference type="GO" id="GO:0000287">
    <property type="term" value="F:magnesium ion binding"/>
    <property type="evidence" value="ECO:0007669"/>
    <property type="project" value="UniProtKB-UniRule"/>
</dbReference>
<dbReference type="GO" id="GO:0008270">
    <property type="term" value="F:zinc ion binding"/>
    <property type="evidence" value="ECO:0007669"/>
    <property type="project" value="UniProtKB-UniRule"/>
</dbReference>
<dbReference type="GO" id="GO:0006351">
    <property type="term" value="P:DNA-templated transcription"/>
    <property type="evidence" value="ECO:0007669"/>
    <property type="project" value="UniProtKB-UniRule"/>
</dbReference>
<dbReference type="Gene3D" id="1.10.40.90">
    <property type="match status" value="1"/>
</dbReference>
<dbReference type="Gene3D" id="2.40.40.20">
    <property type="match status" value="1"/>
</dbReference>
<dbReference type="Gene3D" id="4.10.860.120">
    <property type="entry name" value="RNA polymerase II, clamp domain"/>
    <property type="match status" value="1"/>
</dbReference>
<dbReference type="Gene3D" id="1.10.274.100">
    <property type="entry name" value="RNA polymerase Rpb1, domain 3"/>
    <property type="match status" value="1"/>
</dbReference>
<dbReference type="HAMAP" id="MF_01323">
    <property type="entry name" value="RNApol_bact_RpoC1"/>
    <property type="match status" value="1"/>
</dbReference>
<dbReference type="InterPro" id="IPR045867">
    <property type="entry name" value="DNA-dir_RpoC_beta_prime"/>
</dbReference>
<dbReference type="InterPro" id="IPR000722">
    <property type="entry name" value="RNA_pol_asu"/>
</dbReference>
<dbReference type="InterPro" id="IPR006592">
    <property type="entry name" value="RNA_pol_N"/>
</dbReference>
<dbReference type="InterPro" id="IPR007080">
    <property type="entry name" value="RNA_pol_Rpb1_1"/>
</dbReference>
<dbReference type="InterPro" id="IPR042102">
    <property type="entry name" value="RNA_pol_Rpb1_3_sf"/>
</dbReference>
<dbReference type="InterPro" id="IPR044893">
    <property type="entry name" value="RNA_pol_Rpb1_clamp_domain"/>
</dbReference>
<dbReference type="InterPro" id="IPR034678">
    <property type="entry name" value="RNApol_RpoC1"/>
</dbReference>
<dbReference type="PANTHER" id="PTHR19376">
    <property type="entry name" value="DNA-DIRECTED RNA POLYMERASE"/>
    <property type="match status" value="1"/>
</dbReference>
<dbReference type="PANTHER" id="PTHR19376:SF54">
    <property type="entry name" value="DNA-DIRECTED RNA POLYMERASE SUBUNIT BETA"/>
    <property type="match status" value="1"/>
</dbReference>
<dbReference type="Pfam" id="PF04997">
    <property type="entry name" value="RNA_pol_Rpb1_1"/>
    <property type="match status" value="1"/>
</dbReference>
<dbReference type="Pfam" id="PF00623">
    <property type="entry name" value="RNA_pol_Rpb1_2"/>
    <property type="match status" value="2"/>
</dbReference>
<dbReference type="SMART" id="SM00663">
    <property type="entry name" value="RPOLA_N"/>
    <property type="match status" value="1"/>
</dbReference>
<dbReference type="SUPFAM" id="SSF64484">
    <property type="entry name" value="beta and beta-prime subunits of DNA dependent RNA-polymerase"/>
    <property type="match status" value="1"/>
</dbReference>
<organism>
    <name type="scientific">Brachypodium distachyon</name>
    <name type="common">Purple false brome</name>
    <name type="synonym">Trachynia distachya</name>
    <dbReference type="NCBI Taxonomy" id="15368"/>
    <lineage>
        <taxon>Eukaryota</taxon>
        <taxon>Viridiplantae</taxon>
        <taxon>Streptophyta</taxon>
        <taxon>Embryophyta</taxon>
        <taxon>Tracheophyta</taxon>
        <taxon>Spermatophyta</taxon>
        <taxon>Magnoliopsida</taxon>
        <taxon>Liliopsida</taxon>
        <taxon>Poales</taxon>
        <taxon>Poaceae</taxon>
        <taxon>BOP clade</taxon>
        <taxon>Pooideae</taxon>
        <taxon>Stipodae</taxon>
        <taxon>Brachypodieae</taxon>
        <taxon>Brachypodium</taxon>
    </lineage>
</organism>
<proteinExistence type="inferred from homology"/>
<feature type="chain" id="PRO_0000353476" description="DNA-directed RNA polymerase subunit beta'">
    <location>
        <begin position="1"/>
        <end position="682"/>
    </location>
</feature>
<feature type="binding site" evidence="1">
    <location>
        <position position="69"/>
    </location>
    <ligand>
        <name>Zn(2+)</name>
        <dbReference type="ChEBI" id="CHEBI:29105"/>
    </ligand>
</feature>
<feature type="binding site" evidence="1">
    <location>
        <position position="71"/>
    </location>
    <ligand>
        <name>Zn(2+)</name>
        <dbReference type="ChEBI" id="CHEBI:29105"/>
    </ligand>
</feature>
<feature type="binding site" evidence="1">
    <location>
        <position position="87"/>
    </location>
    <ligand>
        <name>Zn(2+)</name>
        <dbReference type="ChEBI" id="CHEBI:29105"/>
    </ligand>
</feature>
<feature type="binding site" evidence="1">
    <location>
        <position position="90"/>
    </location>
    <ligand>
        <name>Zn(2+)</name>
        <dbReference type="ChEBI" id="CHEBI:29105"/>
    </ligand>
</feature>
<feature type="binding site" evidence="1">
    <location>
        <position position="489"/>
    </location>
    <ligand>
        <name>Mg(2+)</name>
        <dbReference type="ChEBI" id="CHEBI:18420"/>
    </ligand>
</feature>
<feature type="binding site" evidence="1">
    <location>
        <position position="491"/>
    </location>
    <ligand>
        <name>Mg(2+)</name>
        <dbReference type="ChEBI" id="CHEBI:18420"/>
    </ligand>
</feature>
<feature type="binding site" evidence="1">
    <location>
        <position position="493"/>
    </location>
    <ligand>
        <name>Mg(2+)</name>
        <dbReference type="ChEBI" id="CHEBI:18420"/>
    </ligand>
</feature>
<geneLocation type="chloroplast"/>
<gene>
    <name evidence="1" type="primary">rpoC1</name>
</gene>
<accession>B3TN43</accession>
<sequence length="682" mass="77930">MIDQYKHQQLQIGLVSPQQIKAWANKNLPNGEVIGQVTRPSTFHYKTDKPEKDGLFCERIFGPIKSGICACGNSRASGAENEDERFCQKCGVEFADSRIRRYQMGYIKLACPVTHVWYLKGLPSYIANLLDKPLKKLEGLVYGDFSFARPSTKKPTFLRLRGLFEEEIASCNHSISPFFSTPSFTTFRNREIATGAGAIREQLADLDLQIIIENSLVEWKELEDEGYSGDEWEDRKRRIRKVFLIRRMQLAKHFIQTNVEPEWMVLCLLPVLPPELRPIVYRSGDKVVTSDINELYKRVIRRNNNLAYLLKRSELAPADLVMCQEKLVQEAVDTLLDSGSRGQPTRDGHNKVYKSLSDVIEGKEGRFRETLLGKRVDYSGRSVIVVGPSLSLHQCGLPLEIAIKLFQLFVIRDLITKRATSNVRIAKRKIWEKEPIVWEILQEVMRGHPVLLNRAPTLHRLGIQAFQPTLVEGRTISLHPLVCKGFNADFDGDQMAVHLPLSLEAQAEARLLMFSHMNLLSPAIGDPICVPTQDMLIGLYVLTIGNPRGICANRYNSCGNYPNQKVNYNNNNSTYTRDKEPIFYSSYDALGAYRQKLISLDSPLWLRWKLDQRAIGSREVPIEVQYESLGTYHEIYAHYLIVGNRKKEICSIYIRTTLGHISFYREIEEAVQGFSQAYSYTI</sequence>
<protein>
    <recommendedName>
        <fullName evidence="1">DNA-directed RNA polymerase subunit beta'</fullName>
        <ecNumber evidence="1">2.7.7.6</ecNumber>
    </recommendedName>
    <alternativeName>
        <fullName evidence="1">PEP</fullName>
    </alternativeName>
    <alternativeName>
        <fullName evidence="1">Plastid-encoded RNA polymerase subunit beta'</fullName>
        <shortName evidence="1">RNA polymerase subunit beta'</shortName>
    </alternativeName>
</protein>
<reference key="1">
    <citation type="journal article" date="2008" name="BMC Res. Notes">
        <title>The complete chloroplast genome sequence of Brachypodium distachyon: sequence comparison and phylogenetic analysis of eight grass plastomes.</title>
        <authorList>
            <person name="Bortiri E."/>
            <person name="Coleman-Derr D."/>
            <person name="Lazo G.R."/>
            <person name="Anderson O.D."/>
            <person name="Gu Y.Q."/>
        </authorList>
    </citation>
    <scope>NUCLEOTIDE SEQUENCE [LARGE SCALE GENOMIC DNA]</scope>
    <source>
        <strain>cv. Bd21</strain>
    </source>
</reference>